<keyword id="KW-0067">ATP-binding</keyword>
<keyword id="KW-0414">Isoprene biosynthesis</keyword>
<keyword id="KW-0418">Kinase</keyword>
<keyword id="KW-0547">Nucleotide-binding</keyword>
<keyword id="KW-1185">Reference proteome</keyword>
<keyword id="KW-0808">Transferase</keyword>
<organism>
    <name type="scientific">Francisella tularensis subsp. tularensis (strain SCHU S4 / Schu 4)</name>
    <dbReference type="NCBI Taxonomy" id="177416"/>
    <lineage>
        <taxon>Bacteria</taxon>
        <taxon>Pseudomonadati</taxon>
        <taxon>Pseudomonadota</taxon>
        <taxon>Gammaproteobacteria</taxon>
        <taxon>Thiotrichales</taxon>
        <taxon>Francisellaceae</taxon>
        <taxon>Francisella</taxon>
    </lineage>
</organism>
<gene>
    <name evidence="1" type="primary">ispE</name>
    <name type="ordered locus">FTT_0271</name>
</gene>
<name>ISPE_FRATT</name>
<feature type="chain" id="PRO_0000235093" description="4-diphosphocytidyl-2-C-methyl-D-erythritol kinase">
    <location>
        <begin position="1"/>
        <end position="275"/>
    </location>
</feature>
<feature type="active site" evidence="1">
    <location>
        <position position="14"/>
    </location>
</feature>
<feature type="active site" evidence="1">
    <location>
        <position position="140"/>
    </location>
</feature>
<feature type="binding site" evidence="1">
    <location>
        <begin position="98"/>
        <end position="108"/>
    </location>
    <ligand>
        <name>ATP</name>
        <dbReference type="ChEBI" id="CHEBI:30616"/>
    </ligand>
</feature>
<reference key="1">
    <citation type="journal article" date="2005" name="Nat. Genet.">
        <title>The complete genome sequence of Francisella tularensis, the causative agent of tularemia.</title>
        <authorList>
            <person name="Larsson P."/>
            <person name="Oyston P.C.F."/>
            <person name="Chain P."/>
            <person name="Chu M.C."/>
            <person name="Duffield M."/>
            <person name="Fuxelius H.-H."/>
            <person name="Garcia E."/>
            <person name="Haelltorp G."/>
            <person name="Johansson D."/>
            <person name="Isherwood K.E."/>
            <person name="Karp P.D."/>
            <person name="Larsson E."/>
            <person name="Liu Y."/>
            <person name="Michell S."/>
            <person name="Prior J."/>
            <person name="Prior R."/>
            <person name="Malfatti S."/>
            <person name="Sjoestedt A."/>
            <person name="Svensson K."/>
            <person name="Thompson N."/>
            <person name="Vergez L."/>
            <person name="Wagg J.K."/>
            <person name="Wren B.W."/>
            <person name="Lindler L.E."/>
            <person name="Andersson S.G.E."/>
            <person name="Forsman M."/>
            <person name="Titball R.W."/>
        </authorList>
    </citation>
    <scope>NUCLEOTIDE SEQUENCE [LARGE SCALE GENOMIC DNA]</scope>
    <source>
        <strain>SCHU S4 / Schu 4</strain>
    </source>
</reference>
<comment type="function">
    <text evidence="1">Catalyzes the phosphorylation of the position 2 hydroxy group of 4-diphosphocytidyl-2C-methyl-D-erythritol.</text>
</comment>
<comment type="catalytic activity">
    <reaction evidence="1">
        <text>4-CDP-2-C-methyl-D-erythritol + ATP = 4-CDP-2-C-methyl-D-erythritol 2-phosphate + ADP + H(+)</text>
        <dbReference type="Rhea" id="RHEA:18437"/>
        <dbReference type="ChEBI" id="CHEBI:15378"/>
        <dbReference type="ChEBI" id="CHEBI:30616"/>
        <dbReference type="ChEBI" id="CHEBI:57823"/>
        <dbReference type="ChEBI" id="CHEBI:57919"/>
        <dbReference type="ChEBI" id="CHEBI:456216"/>
        <dbReference type="EC" id="2.7.1.148"/>
    </reaction>
</comment>
<comment type="pathway">
    <text evidence="1">Isoprenoid biosynthesis; isopentenyl diphosphate biosynthesis via DXP pathway; isopentenyl diphosphate from 1-deoxy-D-xylulose 5-phosphate: step 3/6.</text>
</comment>
<comment type="similarity">
    <text evidence="1">Belongs to the GHMP kinase family. IspE subfamily.</text>
</comment>
<sequence>MANIKAKKYYSYAKINLFLHILNKRPDGYHNLQTWFTFLDLKDQLTFSFNNSREINISSNISIAAKQDNLVYKAIKKFQQSYRVQDIGVDIEIKKNIPMGAGLGGGSSNAATTLIALRDYYLPQLSNEEMIPLAAKLGADVPIFVYGKSAWAEGIGEILYHKDFSPQYALLIKPDIHISTKEFFTSEDLIKSSVLISKDLGFDKSIMHNDFENVFYAKYPEFSQYLKELDSDFRMTGTGSCFYLLSADKNKLEQLARKINKPLDKWLVKTLNYVY</sequence>
<proteinExistence type="inferred from homology"/>
<evidence type="ECO:0000255" key="1">
    <source>
        <dbReference type="HAMAP-Rule" id="MF_00061"/>
    </source>
</evidence>
<protein>
    <recommendedName>
        <fullName evidence="1">4-diphosphocytidyl-2-C-methyl-D-erythritol kinase</fullName>
        <shortName evidence="1">CMK</shortName>
        <ecNumber evidence="1">2.7.1.148</ecNumber>
    </recommendedName>
    <alternativeName>
        <fullName evidence="1">4-(cytidine-5'-diphospho)-2-C-methyl-D-erythritol kinase</fullName>
    </alternativeName>
</protein>
<dbReference type="EC" id="2.7.1.148" evidence="1"/>
<dbReference type="EMBL" id="AJ749949">
    <property type="protein sequence ID" value="CAG44904.1"/>
    <property type="molecule type" value="Genomic_DNA"/>
</dbReference>
<dbReference type="RefSeq" id="WP_003021712.1">
    <property type="nucleotide sequence ID" value="NC_006570.2"/>
</dbReference>
<dbReference type="RefSeq" id="YP_169323.1">
    <property type="nucleotide sequence ID" value="NC_006570.2"/>
</dbReference>
<dbReference type="SMR" id="Q5NI19"/>
<dbReference type="STRING" id="177416.FTT_0271"/>
<dbReference type="DNASU" id="3190842"/>
<dbReference type="EnsemblBacteria" id="CAG44904">
    <property type="protein sequence ID" value="CAG44904"/>
    <property type="gene ID" value="FTT_0271"/>
</dbReference>
<dbReference type="KEGG" id="ftu:FTT_0271"/>
<dbReference type="eggNOG" id="COG1947">
    <property type="taxonomic scope" value="Bacteria"/>
</dbReference>
<dbReference type="OrthoDB" id="9809438at2"/>
<dbReference type="UniPathway" id="UPA00056">
    <property type="reaction ID" value="UER00094"/>
</dbReference>
<dbReference type="Proteomes" id="UP000001174">
    <property type="component" value="Chromosome"/>
</dbReference>
<dbReference type="GO" id="GO:0050515">
    <property type="term" value="F:4-(cytidine 5'-diphospho)-2-C-methyl-D-erythritol kinase activity"/>
    <property type="evidence" value="ECO:0007669"/>
    <property type="project" value="UniProtKB-UniRule"/>
</dbReference>
<dbReference type="GO" id="GO:0005524">
    <property type="term" value="F:ATP binding"/>
    <property type="evidence" value="ECO:0007669"/>
    <property type="project" value="UniProtKB-UniRule"/>
</dbReference>
<dbReference type="GO" id="GO:0019288">
    <property type="term" value="P:isopentenyl diphosphate biosynthetic process, methylerythritol 4-phosphate pathway"/>
    <property type="evidence" value="ECO:0007669"/>
    <property type="project" value="UniProtKB-UniRule"/>
</dbReference>
<dbReference type="GO" id="GO:0016114">
    <property type="term" value="P:terpenoid biosynthetic process"/>
    <property type="evidence" value="ECO:0007669"/>
    <property type="project" value="InterPro"/>
</dbReference>
<dbReference type="Gene3D" id="3.30.230.10">
    <property type="match status" value="1"/>
</dbReference>
<dbReference type="Gene3D" id="3.30.70.890">
    <property type="entry name" value="GHMP kinase, C-terminal domain"/>
    <property type="match status" value="1"/>
</dbReference>
<dbReference type="HAMAP" id="MF_00061">
    <property type="entry name" value="IspE"/>
    <property type="match status" value="1"/>
</dbReference>
<dbReference type="InterPro" id="IPR013750">
    <property type="entry name" value="GHMP_kinase_C_dom"/>
</dbReference>
<dbReference type="InterPro" id="IPR036554">
    <property type="entry name" value="GHMP_kinase_C_sf"/>
</dbReference>
<dbReference type="InterPro" id="IPR006204">
    <property type="entry name" value="GHMP_kinase_N_dom"/>
</dbReference>
<dbReference type="InterPro" id="IPR004424">
    <property type="entry name" value="IspE"/>
</dbReference>
<dbReference type="InterPro" id="IPR020568">
    <property type="entry name" value="Ribosomal_Su5_D2-typ_SF"/>
</dbReference>
<dbReference type="InterPro" id="IPR014721">
    <property type="entry name" value="Ribsml_uS5_D2-typ_fold_subgr"/>
</dbReference>
<dbReference type="NCBIfam" id="TIGR00154">
    <property type="entry name" value="ispE"/>
    <property type="match status" value="1"/>
</dbReference>
<dbReference type="PANTHER" id="PTHR43527">
    <property type="entry name" value="4-DIPHOSPHOCYTIDYL-2-C-METHYL-D-ERYTHRITOL KINASE, CHLOROPLASTIC"/>
    <property type="match status" value="1"/>
</dbReference>
<dbReference type="PANTHER" id="PTHR43527:SF2">
    <property type="entry name" value="4-DIPHOSPHOCYTIDYL-2-C-METHYL-D-ERYTHRITOL KINASE, CHLOROPLASTIC"/>
    <property type="match status" value="1"/>
</dbReference>
<dbReference type="Pfam" id="PF08544">
    <property type="entry name" value="GHMP_kinases_C"/>
    <property type="match status" value="1"/>
</dbReference>
<dbReference type="Pfam" id="PF00288">
    <property type="entry name" value="GHMP_kinases_N"/>
    <property type="match status" value="1"/>
</dbReference>
<dbReference type="PIRSF" id="PIRSF010376">
    <property type="entry name" value="IspE"/>
    <property type="match status" value="1"/>
</dbReference>
<dbReference type="SUPFAM" id="SSF55060">
    <property type="entry name" value="GHMP Kinase, C-terminal domain"/>
    <property type="match status" value="1"/>
</dbReference>
<dbReference type="SUPFAM" id="SSF54211">
    <property type="entry name" value="Ribosomal protein S5 domain 2-like"/>
    <property type="match status" value="1"/>
</dbReference>
<accession>Q5NI19</accession>